<name>FLOA_DICTD</name>
<accession>B8DZW4</accession>
<organism>
    <name type="scientific">Dictyoglomus turgidum (strain DSM 6724 / Z-1310)</name>
    <dbReference type="NCBI Taxonomy" id="515635"/>
    <lineage>
        <taxon>Bacteria</taxon>
        <taxon>Pseudomonadati</taxon>
        <taxon>Dictyoglomota</taxon>
        <taxon>Dictyoglomia</taxon>
        <taxon>Dictyoglomales</taxon>
        <taxon>Dictyoglomaceae</taxon>
        <taxon>Dictyoglomus</taxon>
    </lineage>
</organism>
<feature type="chain" id="PRO_1000199713" description="Flotillin-like protein FloA">
    <location>
        <begin position="1"/>
        <end position="329"/>
    </location>
</feature>
<feature type="transmembrane region" description="Helical" evidence="1">
    <location>
        <begin position="4"/>
        <end position="24"/>
    </location>
</feature>
<reference key="1">
    <citation type="journal article" date="2016" name="Front. Microbiol.">
        <title>The complete genome sequence of hyperthermophile Dictyoglomus turgidum DSM 6724 reveals a specialized carbohydrate fermentor.</title>
        <authorList>
            <person name="Brumm P.J."/>
            <person name="Gowda K."/>
            <person name="Robb F.T."/>
            <person name="Mead D.A."/>
        </authorList>
    </citation>
    <scope>NUCLEOTIDE SEQUENCE [LARGE SCALE GENOMIC DNA]</scope>
    <source>
        <strain>DSM 6724 / Z-1310</strain>
    </source>
</reference>
<proteinExistence type="inferred from homology"/>
<keyword id="KW-1003">Cell membrane</keyword>
<keyword id="KW-0472">Membrane</keyword>
<keyword id="KW-1185">Reference proteome</keyword>
<keyword id="KW-0812">Transmembrane</keyword>
<keyword id="KW-1133">Transmembrane helix</keyword>
<sequence>MNLIWGFLILILVLIFLGVFFSFVPLGLWISALAAGVSIRITDLIGMRLRRVPPGVIINSLIKAHKAGLSEVTLDKLEAHYLAGGNVDKVVNALIAAQRAGIPLTFEKAAAIDLAGRDVLEAVQMSVNPKVIETPVVAAVAKDGIELKAKARVTVRANIERLVGGAGEATIIARVGEGIVTTIGSAESYKEVLENPDSISKTVLAKGLDAGTAFEIVSIDIADVDVGNNVGARLKMDQAEADMRIAQAQAESRRALAIAREQEMKALTQEMRARLIEAEKEVPLAIAEALRSGKIGVLDYYTLKNIIADTAMREAISKLGQKEEEGRKD</sequence>
<dbReference type="EMBL" id="CP001251">
    <property type="protein sequence ID" value="ACK42047.1"/>
    <property type="molecule type" value="Genomic_DNA"/>
</dbReference>
<dbReference type="RefSeq" id="WP_012583132.1">
    <property type="nucleotide sequence ID" value="NC_011661.1"/>
</dbReference>
<dbReference type="RefSeq" id="YP_002352661.1">
    <property type="nucleotide sequence ID" value="NC_011661.1"/>
</dbReference>
<dbReference type="SMR" id="B8DZW4"/>
<dbReference type="FunCoup" id="B8DZW4">
    <property type="interactions" value="2"/>
</dbReference>
<dbReference type="STRING" id="515635.Dtur_0765"/>
<dbReference type="EnsemblBacteria" id="ACK42047">
    <property type="protein sequence ID" value="ACK42047"/>
    <property type="gene ID" value="Dtur_0765"/>
</dbReference>
<dbReference type="KEGG" id="dtu:Dtur_0765"/>
<dbReference type="PATRIC" id="fig|515635.4.peg.802"/>
<dbReference type="eggNOG" id="COG4864">
    <property type="taxonomic scope" value="Bacteria"/>
</dbReference>
<dbReference type="HOGENOM" id="CLU_836378_0_0_0"/>
<dbReference type="InParanoid" id="B8DZW4"/>
<dbReference type="OrthoDB" id="9808365at2"/>
<dbReference type="Proteomes" id="UP000007719">
    <property type="component" value="Chromosome"/>
</dbReference>
<dbReference type="GO" id="GO:0045121">
    <property type="term" value="C:membrane raft"/>
    <property type="evidence" value="ECO:0007669"/>
    <property type="project" value="UniProtKB-SubCell"/>
</dbReference>
<dbReference type="GO" id="GO:0005886">
    <property type="term" value="C:plasma membrane"/>
    <property type="evidence" value="ECO:0007669"/>
    <property type="project" value="UniProtKB-SubCell"/>
</dbReference>
<dbReference type="HAMAP" id="MF_01562">
    <property type="entry name" value="FloA"/>
    <property type="match status" value="1"/>
</dbReference>
<dbReference type="InterPro" id="IPR022853">
    <property type="entry name" value="FloA"/>
</dbReference>
<dbReference type="NCBIfam" id="NF010186">
    <property type="entry name" value="PRK13665.1"/>
    <property type="match status" value="1"/>
</dbReference>
<dbReference type="Pfam" id="PF12127">
    <property type="entry name" value="FloA"/>
    <property type="match status" value="1"/>
</dbReference>
<comment type="function">
    <text evidence="1">Found in functional membrane microdomains (FMM) that may be equivalent to eukaryotic membrane rafts. FMMs are highly dynamic and increase in number as cells age. Flotillins are thought to be important factors in membrane fluidity.</text>
</comment>
<comment type="subunit">
    <text evidence="1">Homooligomerizes.</text>
</comment>
<comment type="subcellular location">
    <subcellularLocation>
        <location evidence="1">Cell membrane</location>
        <topology evidence="1">Single-pass membrane protein</topology>
    </subcellularLocation>
    <subcellularLocation>
        <location evidence="1">Membrane raft</location>
        <topology evidence="1">Single-pass membrane protein</topology>
    </subcellularLocation>
</comment>
<comment type="similarity">
    <text evidence="1">Belongs to the flotillin-like FloA family.</text>
</comment>
<protein>
    <recommendedName>
        <fullName evidence="1">Flotillin-like protein FloA</fullName>
    </recommendedName>
</protein>
<evidence type="ECO:0000255" key="1">
    <source>
        <dbReference type="HAMAP-Rule" id="MF_01562"/>
    </source>
</evidence>
<gene>
    <name evidence="1" type="primary">floA</name>
    <name type="ordered locus">Dtur_0765</name>
</gene>